<dbReference type="EMBL" id="CT978603">
    <property type="protein sequence ID" value="CAK28736.1"/>
    <property type="molecule type" value="Genomic_DNA"/>
</dbReference>
<dbReference type="SMR" id="A5GV27"/>
<dbReference type="STRING" id="316278.SynRCC307_1833"/>
<dbReference type="KEGG" id="syr:SynRCC307_1833"/>
<dbReference type="eggNOG" id="COG0217">
    <property type="taxonomic scope" value="Bacteria"/>
</dbReference>
<dbReference type="HOGENOM" id="CLU_062974_2_2_3"/>
<dbReference type="OrthoDB" id="9781053at2"/>
<dbReference type="Proteomes" id="UP000001115">
    <property type="component" value="Chromosome"/>
</dbReference>
<dbReference type="GO" id="GO:0005829">
    <property type="term" value="C:cytosol"/>
    <property type="evidence" value="ECO:0007669"/>
    <property type="project" value="TreeGrafter"/>
</dbReference>
<dbReference type="GO" id="GO:0003677">
    <property type="term" value="F:DNA binding"/>
    <property type="evidence" value="ECO:0007669"/>
    <property type="project" value="UniProtKB-UniRule"/>
</dbReference>
<dbReference type="GO" id="GO:0006355">
    <property type="term" value="P:regulation of DNA-templated transcription"/>
    <property type="evidence" value="ECO:0007669"/>
    <property type="project" value="UniProtKB-UniRule"/>
</dbReference>
<dbReference type="FunFam" id="1.10.10.200:FF:000002">
    <property type="entry name" value="Probable transcriptional regulatory protein CLM62_37755"/>
    <property type="match status" value="1"/>
</dbReference>
<dbReference type="Gene3D" id="1.10.10.200">
    <property type="match status" value="1"/>
</dbReference>
<dbReference type="Gene3D" id="3.30.70.980">
    <property type="match status" value="2"/>
</dbReference>
<dbReference type="HAMAP" id="MF_00693">
    <property type="entry name" value="Transcrip_reg_TACO1"/>
    <property type="match status" value="1"/>
</dbReference>
<dbReference type="InterPro" id="IPR017856">
    <property type="entry name" value="Integrase-like_N"/>
</dbReference>
<dbReference type="InterPro" id="IPR048300">
    <property type="entry name" value="TACO1_YebC-like_2nd/3rd_dom"/>
</dbReference>
<dbReference type="InterPro" id="IPR049083">
    <property type="entry name" value="TACO1_YebC_N"/>
</dbReference>
<dbReference type="InterPro" id="IPR002876">
    <property type="entry name" value="Transcrip_reg_TACO1-like"/>
</dbReference>
<dbReference type="InterPro" id="IPR026564">
    <property type="entry name" value="Transcrip_reg_TACO1-like_dom3"/>
</dbReference>
<dbReference type="InterPro" id="IPR029072">
    <property type="entry name" value="YebC-like"/>
</dbReference>
<dbReference type="NCBIfam" id="NF001030">
    <property type="entry name" value="PRK00110.1"/>
    <property type="match status" value="1"/>
</dbReference>
<dbReference type="NCBIfam" id="NF009044">
    <property type="entry name" value="PRK12378.1"/>
    <property type="match status" value="1"/>
</dbReference>
<dbReference type="NCBIfam" id="TIGR01033">
    <property type="entry name" value="YebC/PmpR family DNA-binding transcriptional regulator"/>
    <property type="match status" value="1"/>
</dbReference>
<dbReference type="PANTHER" id="PTHR12532:SF6">
    <property type="entry name" value="TRANSCRIPTIONAL REGULATORY PROTEIN YEBC-RELATED"/>
    <property type="match status" value="1"/>
</dbReference>
<dbReference type="PANTHER" id="PTHR12532">
    <property type="entry name" value="TRANSLATIONAL ACTIVATOR OF CYTOCHROME C OXIDASE 1"/>
    <property type="match status" value="1"/>
</dbReference>
<dbReference type="Pfam" id="PF20772">
    <property type="entry name" value="TACO1_YebC_N"/>
    <property type="match status" value="1"/>
</dbReference>
<dbReference type="Pfam" id="PF01709">
    <property type="entry name" value="Transcrip_reg"/>
    <property type="match status" value="1"/>
</dbReference>
<dbReference type="SUPFAM" id="SSF75625">
    <property type="entry name" value="YebC-like"/>
    <property type="match status" value="1"/>
</dbReference>
<gene>
    <name type="ordered locus">SynRCC307_1833</name>
</gene>
<keyword id="KW-0963">Cytoplasm</keyword>
<keyword id="KW-0238">DNA-binding</keyword>
<keyword id="KW-1185">Reference proteome</keyword>
<keyword id="KW-0804">Transcription</keyword>
<keyword id="KW-0805">Transcription regulation</keyword>
<comment type="subcellular location">
    <subcellularLocation>
        <location evidence="1">Cytoplasm</location>
    </subcellularLocation>
</comment>
<comment type="similarity">
    <text evidence="1">Belongs to the TACO1 family.</text>
</comment>
<feature type="chain" id="PRO_1000045384" description="Probable transcriptional regulatory protein SynRCC307_1833">
    <location>
        <begin position="1"/>
        <end position="253"/>
    </location>
</feature>
<accession>A5GV27</accession>
<evidence type="ECO:0000255" key="1">
    <source>
        <dbReference type="HAMAP-Rule" id="MF_00693"/>
    </source>
</evidence>
<reference key="1">
    <citation type="submission" date="2006-05" db="EMBL/GenBank/DDBJ databases">
        <authorList>
            <consortium name="Genoscope"/>
        </authorList>
    </citation>
    <scope>NUCLEOTIDE SEQUENCE [LARGE SCALE GENOMIC DNA]</scope>
    <source>
        <strain>RCC307</strain>
    </source>
</reference>
<sequence>MAGHSKWSQIKRTKAVVDAKRGAVFTRLGREISVAARAGADPDGNFQLRTAINKAKAAGVPAANIERAIAKGCGAGGDGSQAFEEIRYEGYGPGGVAVLVEVLSDNRNRTAAELRLAFSKNGGNLGESGCVGFLFSHRSEVSLNATSAEGIDEDALLEDLLELEADGYELTEEGALVHGPFTALEILQDGLRQRGWSVQDWGHQWHPLNSIDLHQSDQARQCLQLLEALEALDDVRSVSCNLGEFPELENERS</sequence>
<protein>
    <recommendedName>
        <fullName evidence="1">Probable transcriptional regulatory protein SynRCC307_1833</fullName>
    </recommendedName>
</protein>
<proteinExistence type="inferred from homology"/>
<name>Y1833_SYNR3</name>
<organism>
    <name type="scientific">Synechococcus sp. (strain RCC307)</name>
    <dbReference type="NCBI Taxonomy" id="316278"/>
    <lineage>
        <taxon>Bacteria</taxon>
        <taxon>Bacillati</taxon>
        <taxon>Cyanobacteriota</taxon>
        <taxon>Cyanophyceae</taxon>
        <taxon>Synechococcales</taxon>
        <taxon>Synechococcaceae</taxon>
        <taxon>Synechococcus</taxon>
    </lineage>
</organism>